<keyword id="KW-1185">Reference proteome</keyword>
<keyword id="KW-0687">Ribonucleoprotein</keyword>
<keyword id="KW-0689">Ribosomal protein</keyword>
<keyword id="KW-0694">RNA-binding</keyword>
<keyword id="KW-0699">rRNA-binding</keyword>
<protein>
    <recommendedName>
        <fullName evidence="1">Large ribosomal subunit protein uL18</fullName>
    </recommendedName>
    <alternativeName>
        <fullName evidence="2">50S ribosomal protein L18</fullName>
    </alternativeName>
</protein>
<gene>
    <name evidence="1" type="primary">rplR</name>
    <name type="ordered locus">PP_0470</name>
</gene>
<sequence length="116" mass="12628">MTDKKVIRLRRARKARLKMHELEVVRLCVFRSSQHIYAQVISADGSKVLASASTLDKDLRDGATGNIDAATKVGKLVAERAKAAGVSQVAFDRSGFKYHGRVKALADAAREGGLEF</sequence>
<dbReference type="EMBL" id="AE015451">
    <property type="protein sequence ID" value="AAN66100.1"/>
    <property type="molecule type" value="Genomic_DNA"/>
</dbReference>
<dbReference type="RefSeq" id="NP_742636.1">
    <property type="nucleotide sequence ID" value="NC_002947.4"/>
</dbReference>
<dbReference type="RefSeq" id="WP_003255467.1">
    <property type="nucleotide sequence ID" value="NZ_CP169744.1"/>
</dbReference>
<dbReference type="SMR" id="Q88QL9"/>
<dbReference type="STRING" id="160488.PP_0470"/>
<dbReference type="PaxDb" id="160488-PP_0470"/>
<dbReference type="GeneID" id="83677768"/>
<dbReference type="KEGG" id="ppu:PP_0470"/>
<dbReference type="PATRIC" id="fig|160488.4.peg.502"/>
<dbReference type="eggNOG" id="COG0256">
    <property type="taxonomic scope" value="Bacteria"/>
</dbReference>
<dbReference type="HOGENOM" id="CLU_098841_0_1_6"/>
<dbReference type="OrthoDB" id="9810939at2"/>
<dbReference type="PhylomeDB" id="Q88QL9"/>
<dbReference type="BioCyc" id="PPUT160488:G1G01-516-MONOMER"/>
<dbReference type="Proteomes" id="UP000000556">
    <property type="component" value="Chromosome"/>
</dbReference>
<dbReference type="GO" id="GO:0022625">
    <property type="term" value="C:cytosolic large ribosomal subunit"/>
    <property type="evidence" value="ECO:0007669"/>
    <property type="project" value="TreeGrafter"/>
</dbReference>
<dbReference type="GO" id="GO:0008097">
    <property type="term" value="F:5S rRNA binding"/>
    <property type="evidence" value="ECO:0007669"/>
    <property type="project" value="TreeGrafter"/>
</dbReference>
<dbReference type="GO" id="GO:0003735">
    <property type="term" value="F:structural constituent of ribosome"/>
    <property type="evidence" value="ECO:0007669"/>
    <property type="project" value="InterPro"/>
</dbReference>
<dbReference type="GO" id="GO:0006412">
    <property type="term" value="P:translation"/>
    <property type="evidence" value="ECO:0007669"/>
    <property type="project" value="UniProtKB-UniRule"/>
</dbReference>
<dbReference type="CDD" id="cd00432">
    <property type="entry name" value="Ribosomal_L18_L5e"/>
    <property type="match status" value="1"/>
</dbReference>
<dbReference type="FunFam" id="3.30.420.100:FF:000001">
    <property type="entry name" value="50S ribosomal protein L18"/>
    <property type="match status" value="1"/>
</dbReference>
<dbReference type="Gene3D" id="3.30.420.100">
    <property type="match status" value="1"/>
</dbReference>
<dbReference type="HAMAP" id="MF_01337_B">
    <property type="entry name" value="Ribosomal_uL18_B"/>
    <property type="match status" value="1"/>
</dbReference>
<dbReference type="InterPro" id="IPR004389">
    <property type="entry name" value="Ribosomal_uL18_bac-type"/>
</dbReference>
<dbReference type="InterPro" id="IPR005484">
    <property type="entry name" value="Ribosomal_uL18_bac/euk"/>
</dbReference>
<dbReference type="NCBIfam" id="TIGR00060">
    <property type="entry name" value="L18_bact"/>
    <property type="match status" value="1"/>
</dbReference>
<dbReference type="PANTHER" id="PTHR12899">
    <property type="entry name" value="39S RIBOSOMAL PROTEIN L18, MITOCHONDRIAL"/>
    <property type="match status" value="1"/>
</dbReference>
<dbReference type="PANTHER" id="PTHR12899:SF3">
    <property type="entry name" value="LARGE RIBOSOMAL SUBUNIT PROTEIN UL18M"/>
    <property type="match status" value="1"/>
</dbReference>
<dbReference type="Pfam" id="PF00861">
    <property type="entry name" value="Ribosomal_L18p"/>
    <property type="match status" value="1"/>
</dbReference>
<dbReference type="SUPFAM" id="SSF53137">
    <property type="entry name" value="Translational machinery components"/>
    <property type="match status" value="1"/>
</dbReference>
<feature type="chain" id="PRO_0000131323" description="Large ribosomal subunit protein uL18">
    <location>
        <begin position="1"/>
        <end position="116"/>
    </location>
</feature>
<proteinExistence type="inferred from homology"/>
<reference key="1">
    <citation type="journal article" date="2002" name="Environ. Microbiol.">
        <title>Complete genome sequence and comparative analysis of the metabolically versatile Pseudomonas putida KT2440.</title>
        <authorList>
            <person name="Nelson K.E."/>
            <person name="Weinel C."/>
            <person name="Paulsen I.T."/>
            <person name="Dodson R.J."/>
            <person name="Hilbert H."/>
            <person name="Martins dos Santos V.A.P."/>
            <person name="Fouts D.E."/>
            <person name="Gill S.R."/>
            <person name="Pop M."/>
            <person name="Holmes M."/>
            <person name="Brinkac L.M."/>
            <person name="Beanan M.J."/>
            <person name="DeBoy R.T."/>
            <person name="Daugherty S.C."/>
            <person name="Kolonay J.F."/>
            <person name="Madupu R."/>
            <person name="Nelson W.C."/>
            <person name="White O."/>
            <person name="Peterson J.D."/>
            <person name="Khouri H.M."/>
            <person name="Hance I."/>
            <person name="Chris Lee P."/>
            <person name="Holtzapple E.K."/>
            <person name="Scanlan D."/>
            <person name="Tran K."/>
            <person name="Moazzez A."/>
            <person name="Utterback T.R."/>
            <person name="Rizzo M."/>
            <person name="Lee K."/>
            <person name="Kosack D."/>
            <person name="Moestl D."/>
            <person name="Wedler H."/>
            <person name="Lauber J."/>
            <person name="Stjepandic D."/>
            <person name="Hoheisel J."/>
            <person name="Straetz M."/>
            <person name="Heim S."/>
            <person name="Kiewitz C."/>
            <person name="Eisen J.A."/>
            <person name="Timmis K.N."/>
            <person name="Duesterhoeft A."/>
            <person name="Tuemmler B."/>
            <person name="Fraser C.M."/>
        </authorList>
    </citation>
    <scope>NUCLEOTIDE SEQUENCE [LARGE SCALE GENOMIC DNA]</scope>
    <source>
        <strain>ATCC 47054 / DSM 6125 / CFBP 8728 / NCIMB 11950 / KT2440</strain>
    </source>
</reference>
<comment type="function">
    <text evidence="1">This is one of the proteins that bind and probably mediate the attachment of the 5S RNA into the large ribosomal subunit, where it forms part of the central protuberance.</text>
</comment>
<comment type="subunit">
    <text evidence="1">Part of the 50S ribosomal subunit; part of the 5S rRNA/L5/L18/L25 subcomplex. Contacts the 5S and 23S rRNAs.</text>
</comment>
<comment type="similarity">
    <text evidence="1">Belongs to the universal ribosomal protein uL18 family.</text>
</comment>
<organism>
    <name type="scientific">Pseudomonas putida (strain ATCC 47054 / DSM 6125 / CFBP 8728 / NCIMB 11950 / KT2440)</name>
    <dbReference type="NCBI Taxonomy" id="160488"/>
    <lineage>
        <taxon>Bacteria</taxon>
        <taxon>Pseudomonadati</taxon>
        <taxon>Pseudomonadota</taxon>
        <taxon>Gammaproteobacteria</taxon>
        <taxon>Pseudomonadales</taxon>
        <taxon>Pseudomonadaceae</taxon>
        <taxon>Pseudomonas</taxon>
    </lineage>
</organism>
<accession>Q88QL9</accession>
<name>RL18_PSEPK</name>
<evidence type="ECO:0000255" key="1">
    <source>
        <dbReference type="HAMAP-Rule" id="MF_01337"/>
    </source>
</evidence>
<evidence type="ECO:0000305" key="2"/>